<gene>
    <name evidence="1" type="primary">glnD</name>
    <name type="ordered locus">YpsIP31758_1011</name>
</gene>
<reference key="1">
    <citation type="journal article" date="2007" name="PLoS Genet.">
        <title>The complete genome sequence of Yersinia pseudotuberculosis IP31758, the causative agent of Far East scarlet-like fever.</title>
        <authorList>
            <person name="Eppinger M."/>
            <person name="Rosovitz M.J."/>
            <person name="Fricke W.F."/>
            <person name="Rasko D.A."/>
            <person name="Kokorina G."/>
            <person name="Fayolle C."/>
            <person name="Lindler L.E."/>
            <person name="Carniel E."/>
            <person name="Ravel J."/>
        </authorList>
    </citation>
    <scope>NUCLEOTIDE SEQUENCE [LARGE SCALE GENOMIC DNA]</scope>
    <source>
        <strain>IP 31758</strain>
    </source>
</reference>
<organism>
    <name type="scientific">Yersinia pseudotuberculosis serotype O:1b (strain IP 31758)</name>
    <dbReference type="NCBI Taxonomy" id="349747"/>
    <lineage>
        <taxon>Bacteria</taxon>
        <taxon>Pseudomonadati</taxon>
        <taxon>Pseudomonadota</taxon>
        <taxon>Gammaproteobacteria</taxon>
        <taxon>Enterobacterales</taxon>
        <taxon>Yersiniaceae</taxon>
        <taxon>Yersinia</taxon>
    </lineage>
</organism>
<accession>A7FFG7</accession>
<proteinExistence type="inferred from homology"/>
<comment type="function">
    <text evidence="1">Modifies, by uridylylation and deuridylylation, the PII regulatory proteins (GlnB and homologs), in response to the nitrogen status of the cell that GlnD senses through the glutamine level. Under low glutamine levels, catalyzes the conversion of the PII proteins and UTP to PII-UMP and PPi, while under higher glutamine levels, GlnD hydrolyzes PII-UMP to PII and UMP (deuridylylation). Thus, controls uridylylation state and activity of the PII proteins, and plays an important role in the regulation of nitrogen assimilation and metabolism.</text>
</comment>
<comment type="catalytic activity">
    <reaction evidence="1">
        <text>[protein-PII]-L-tyrosine + UTP = [protein-PII]-uridylyl-L-tyrosine + diphosphate</text>
        <dbReference type="Rhea" id="RHEA:13673"/>
        <dbReference type="Rhea" id="RHEA-COMP:12147"/>
        <dbReference type="Rhea" id="RHEA-COMP:12148"/>
        <dbReference type="ChEBI" id="CHEBI:33019"/>
        <dbReference type="ChEBI" id="CHEBI:46398"/>
        <dbReference type="ChEBI" id="CHEBI:46858"/>
        <dbReference type="ChEBI" id="CHEBI:90602"/>
        <dbReference type="EC" id="2.7.7.59"/>
    </reaction>
</comment>
<comment type="catalytic activity">
    <reaction evidence="1">
        <text>[protein-PII]-uridylyl-L-tyrosine + H2O = [protein-PII]-L-tyrosine + UMP + H(+)</text>
        <dbReference type="Rhea" id="RHEA:48600"/>
        <dbReference type="Rhea" id="RHEA-COMP:12147"/>
        <dbReference type="Rhea" id="RHEA-COMP:12148"/>
        <dbReference type="ChEBI" id="CHEBI:15377"/>
        <dbReference type="ChEBI" id="CHEBI:15378"/>
        <dbReference type="ChEBI" id="CHEBI:46858"/>
        <dbReference type="ChEBI" id="CHEBI:57865"/>
        <dbReference type="ChEBI" id="CHEBI:90602"/>
    </reaction>
</comment>
<comment type="cofactor">
    <cofactor evidence="1">
        <name>Mg(2+)</name>
        <dbReference type="ChEBI" id="CHEBI:18420"/>
    </cofactor>
</comment>
<comment type="activity regulation">
    <text evidence="1">Uridylyltransferase (UTase) activity is inhibited by glutamine, while glutamine activates uridylyl-removing (UR) activity.</text>
</comment>
<comment type="domain">
    <text evidence="1">Has four distinct domains: an N-terminal nucleotidyltransferase (NT) domain responsible for UTase activity, a central HD domain that encodes UR activity, and two C-terminal ACT domains that seem to have a role in glutamine sensing.</text>
</comment>
<comment type="similarity">
    <text evidence="1">Belongs to the GlnD family.</text>
</comment>
<sequence length="893" mass="103158">MSDNHTEHSLSLTLTPTISEQPALPSTYLDSDIHCPILKQRLDAFQRWQAEAFNSGTSAEVLIAARSDYIDHLLQRLWTFYGFDKVPETALVAVGGYGRGELHPLSDIDVLVLSKQRLNDEQAQRVGQLITLLWDLKLEVGHSVRTLEECLLEGLADLTIATNMIESRLICGDVALFLQMQKHIFSDSFWPSPQFFHAKVVEQQERHKRYHGTSYNLEPDIKSSPGGLRDIHTLLWVARRHFGATSLSEMVDFGFLTNAERNELNESQSFLWRIRFALHLVLTRYDNRLLFDRQLSVAQLLRYEGEGNEPVEHMMKDFYRMTRRVSELNNMLLQLFDEAILALDANEKPRPLDEEFQLRGDLIDLRDENLFVRQPEAIMRMFYLMVRNQDIKGIYSTTVRRLRHARRHLKAPLCHIPEARKLFMAILRHPGAVSRALLPMHRHSVLWAYMPQWGSIVGQMQFDLFHAYTVDEHTIRVLLKIESFADEDTRPRHPLCVELYPRLPQPELLLLAALFHDIAKGRGGDHSILGAHDAVEFAEQHGLNSRESQLVAWLVRCHLLMSVTAQRRDIQDPAVIQQFSAEVQSETRLRYLVSLTVADICATNENLWNSWKQSLLRELYFATEKQLRRGMQNSPDLRERVRHHRLQALALLRMDNIDEEALHRIWSRCRADYFLRHSPNQLAWHARHLLEHDSTKPLVLVSRQATRGGTEIFIWSPDRPSLFAAVVGELDRRNLSVHDAQIFTNRDGMAMDTFIVLEPDGSPLAQDRHPIISHALQQAINRSDYQHPPRVRRLSPKLRHFSVPTEANFLPTHNERRTYLELIALDQPGLLARVGKIFADLGLSLHSARITTIGERVEDLFVLADKDRRALSLETRRELAQRLADTLNPNDKL</sequence>
<dbReference type="EC" id="2.7.7.59" evidence="1"/>
<dbReference type="EC" id="3.1.4.-" evidence="1"/>
<dbReference type="EMBL" id="CP000720">
    <property type="protein sequence ID" value="ABS45868.1"/>
    <property type="molecule type" value="Genomic_DNA"/>
</dbReference>
<dbReference type="RefSeq" id="WP_002212129.1">
    <property type="nucleotide sequence ID" value="NC_009708.1"/>
</dbReference>
<dbReference type="SMR" id="A7FFG7"/>
<dbReference type="GeneID" id="57977519"/>
<dbReference type="KEGG" id="ypi:YpsIP31758_1011"/>
<dbReference type="HOGENOM" id="CLU_012833_0_0_6"/>
<dbReference type="Proteomes" id="UP000002412">
    <property type="component" value="Chromosome"/>
</dbReference>
<dbReference type="GO" id="GO:0008773">
    <property type="term" value="F:[protein-PII] uridylyltransferase activity"/>
    <property type="evidence" value="ECO:0007669"/>
    <property type="project" value="UniProtKB-UniRule"/>
</dbReference>
<dbReference type="GO" id="GO:0008081">
    <property type="term" value="F:phosphoric diester hydrolase activity"/>
    <property type="evidence" value="ECO:0007669"/>
    <property type="project" value="UniProtKB-UniRule"/>
</dbReference>
<dbReference type="GO" id="GO:0006808">
    <property type="term" value="P:regulation of nitrogen utilization"/>
    <property type="evidence" value="ECO:0007669"/>
    <property type="project" value="UniProtKB-UniRule"/>
</dbReference>
<dbReference type="CDD" id="cd04899">
    <property type="entry name" value="ACT_ACR-UUR-like_2"/>
    <property type="match status" value="1"/>
</dbReference>
<dbReference type="CDD" id="cd04900">
    <property type="entry name" value="ACT_UUR-like_1"/>
    <property type="match status" value="1"/>
</dbReference>
<dbReference type="CDD" id="cd00077">
    <property type="entry name" value="HDc"/>
    <property type="match status" value="1"/>
</dbReference>
<dbReference type="CDD" id="cd05401">
    <property type="entry name" value="NT_GlnE_GlnD_like"/>
    <property type="match status" value="1"/>
</dbReference>
<dbReference type="FunFam" id="1.10.3210.10:FF:000005">
    <property type="entry name" value="Bifunctional uridylyltransferase/uridylyl-removing enzyme"/>
    <property type="match status" value="1"/>
</dbReference>
<dbReference type="Gene3D" id="1.10.3210.10">
    <property type="entry name" value="Hypothetical protein af1432"/>
    <property type="match status" value="1"/>
</dbReference>
<dbReference type="HAMAP" id="MF_00277">
    <property type="entry name" value="PII_uridylyl_transf"/>
    <property type="match status" value="1"/>
</dbReference>
<dbReference type="InterPro" id="IPR045865">
    <property type="entry name" value="ACT-like_dom_sf"/>
</dbReference>
<dbReference type="InterPro" id="IPR002912">
    <property type="entry name" value="ACT_dom"/>
</dbReference>
<dbReference type="InterPro" id="IPR003607">
    <property type="entry name" value="HD/PDEase_dom"/>
</dbReference>
<dbReference type="InterPro" id="IPR006674">
    <property type="entry name" value="HD_domain"/>
</dbReference>
<dbReference type="InterPro" id="IPR043519">
    <property type="entry name" value="NT_sf"/>
</dbReference>
<dbReference type="InterPro" id="IPR013546">
    <property type="entry name" value="PII_UdlTrfase/GS_AdlTrfase"/>
</dbReference>
<dbReference type="InterPro" id="IPR002934">
    <property type="entry name" value="Polymerase_NTP_transf_dom"/>
</dbReference>
<dbReference type="InterPro" id="IPR010043">
    <property type="entry name" value="UTase/UR"/>
</dbReference>
<dbReference type="NCBIfam" id="NF002487">
    <property type="entry name" value="PRK01759.1"/>
    <property type="match status" value="1"/>
</dbReference>
<dbReference type="NCBIfam" id="NF003448">
    <property type="entry name" value="PRK05007.1"/>
    <property type="match status" value="1"/>
</dbReference>
<dbReference type="NCBIfam" id="TIGR01693">
    <property type="entry name" value="UTase_glnD"/>
    <property type="match status" value="1"/>
</dbReference>
<dbReference type="PANTHER" id="PTHR47320">
    <property type="entry name" value="BIFUNCTIONAL URIDYLYLTRANSFERASE/URIDYLYL-REMOVING ENZYME"/>
    <property type="match status" value="1"/>
</dbReference>
<dbReference type="PANTHER" id="PTHR47320:SF1">
    <property type="entry name" value="BIFUNCTIONAL URIDYLYLTRANSFERASE_URIDYLYL-REMOVING ENZYME"/>
    <property type="match status" value="1"/>
</dbReference>
<dbReference type="Pfam" id="PF01842">
    <property type="entry name" value="ACT"/>
    <property type="match status" value="1"/>
</dbReference>
<dbReference type="Pfam" id="PF08335">
    <property type="entry name" value="GlnD_UR_UTase"/>
    <property type="match status" value="1"/>
</dbReference>
<dbReference type="Pfam" id="PF01966">
    <property type="entry name" value="HD"/>
    <property type="match status" value="1"/>
</dbReference>
<dbReference type="Pfam" id="PF01909">
    <property type="entry name" value="NTP_transf_2"/>
    <property type="match status" value="1"/>
</dbReference>
<dbReference type="PIRSF" id="PIRSF006288">
    <property type="entry name" value="PII_uridyltransf"/>
    <property type="match status" value="1"/>
</dbReference>
<dbReference type="SMART" id="SM00471">
    <property type="entry name" value="HDc"/>
    <property type="match status" value="1"/>
</dbReference>
<dbReference type="SUPFAM" id="SSF55021">
    <property type="entry name" value="ACT-like"/>
    <property type="match status" value="2"/>
</dbReference>
<dbReference type="SUPFAM" id="SSF109604">
    <property type="entry name" value="HD-domain/PDEase-like"/>
    <property type="match status" value="1"/>
</dbReference>
<dbReference type="SUPFAM" id="SSF81301">
    <property type="entry name" value="Nucleotidyltransferase"/>
    <property type="match status" value="1"/>
</dbReference>
<dbReference type="SUPFAM" id="SSF81593">
    <property type="entry name" value="Nucleotidyltransferase substrate binding subunit/domain"/>
    <property type="match status" value="1"/>
</dbReference>
<dbReference type="SUPFAM" id="SSF81891">
    <property type="entry name" value="Poly A polymerase C-terminal region-like"/>
    <property type="match status" value="1"/>
</dbReference>
<dbReference type="PROSITE" id="PS51671">
    <property type="entry name" value="ACT"/>
    <property type="match status" value="2"/>
</dbReference>
<dbReference type="PROSITE" id="PS51831">
    <property type="entry name" value="HD"/>
    <property type="match status" value="1"/>
</dbReference>
<feature type="chain" id="PRO_1000059227" description="Bifunctional uridylyltransferase/uridylyl-removing enzyme">
    <location>
        <begin position="1"/>
        <end position="893"/>
    </location>
</feature>
<feature type="domain" description="HD" evidence="2">
    <location>
        <begin position="470"/>
        <end position="592"/>
    </location>
</feature>
<feature type="domain" description="ACT 1" evidence="1">
    <location>
        <begin position="711"/>
        <end position="793"/>
    </location>
</feature>
<feature type="domain" description="ACT 2" evidence="1">
    <location>
        <begin position="819"/>
        <end position="893"/>
    </location>
</feature>
<feature type="region of interest" description="Uridylyltransferase">
    <location>
        <begin position="1"/>
        <end position="351"/>
    </location>
</feature>
<feature type="region of interest" description="Uridylyl-removing">
    <location>
        <begin position="352"/>
        <end position="710"/>
    </location>
</feature>
<protein>
    <recommendedName>
        <fullName evidence="1">Bifunctional uridylyltransferase/uridylyl-removing enzyme</fullName>
        <shortName evidence="1">UTase/UR</shortName>
    </recommendedName>
    <alternativeName>
        <fullName evidence="1">Bifunctional [protein-PII] modification enzyme</fullName>
    </alternativeName>
    <alternativeName>
        <fullName evidence="1">Bifunctional nitrogen sensor protein</fullName>
    </alternativeName>
    <domain>
        <recommendedName>
            <fullName evidence="1">[Protein-PII] uridylyltransferase</fullName>
            <shortName evidence="1">PII uridylyltransferase</shortName>
            <shortName evidence="1">UTase</shortName>
            <ecNumber evidence="1">2.7.7.59</ecNumber>
        </recommendedName>
    </domain>
    <domain>
        <recommendedName>
            <fullName evidence="1">[Protein-PII]-UMP uridylyl-removing enzyme</fullName>
            <shortName evidence="1">UR</shortName>
            <ecNumber evidence="1">3.1.4.-</ecNumber>
        </recommendedName>
    </domain>
</protein>
<evidence type="ECO:0000255" key="1">
    <source>
        <dbReference type="HAMAP-Rule" id="MF_00277"/>
    </source>
</evidence>
<evidence type="ECO:0000255" key="2">
    <source>
        <dbReference type="PROSITE-ProRule" id="PRU01175"/>
    </source>
</evidence>
<name>GLND_YERP3</name>
<keyword id="KW-0378">Hydrolase</keyword>
<keyword id="KW-0460">Magnesium</keyword>
<keyword id="KW-0511">Multifunctional enzyme</keyword>
<keyword id="KW-0548">Nucleotidyltransferase</keyword>
<keyword id="KW-0677">Repeat</keyword>
<keyword id="KW-0808">Transferase</keyword>